<proteinExistence type="inferred from homology"/>
<comment type="function">
    <text evidence="1">Catalyzes a transaldol reaction between 6-deoxy-5-ketofructose 1-phosphate (DKFP) and L-aspartate semialdehyde (ASA) with an elimination of hydroxypyruvaldehyde phosphate to yield 2-amino-3,7-dideoxy-D-threo-hept-6-ulosonate (ADH). Plays a key role in an alternative pathway of the biosynthesis of 3-dehydroquinate (DHQ), which is involved in the canonical pathway for the biosynthesis of aromatic amino acids.</text>
</comment>
<comment type="catalytic activity">
    <reaction evidence="1">
        <text>1-deoxy-D-threo-hexo-2,5-diulose 6-phosphate + L-aspartate 4-semialdehyde = 2,3-dioxopropyl phosphate + 2-amino-2,3,7-trideoxy-D-lyxo-hept-6-ulosonate</text>
        <dbReference type="Rhea" id="RHEA:25952"/>
        <dbReference type="ChEBI" id="CHEBI:58859"/>
        <dbReference type="ChEBI" id="CHEBI:58860"/>
        <dbReference type="ChEBI" id="CHEBI:58861"/>
        <dbReference type="ChEBI" id="CHEBI:537519"/>
        <dbReference type="EC" id="2.2.1.10"/>
    </reaction>
</comment>
<comment type="subunit">
    <text evidence="1">Homodecamer.</text>
</comment>
<comment type="similarity">
    <text evidence="1">Belongs to the DeoC/FbaB aldolase family. ADHS subfamily.</text>
</comment>
<protein>
    <recommendedName>
        <fullName evidence="1">2-amino-3,7-dideoxy-D-threo-hept-6-ulosonate synthase</fullName>
        <shortName evidence="1">ADH synthase</shortName>
        <shortName evidence="1">ADHS</shortName>
        <shortName evidence="1">ADTH synthase</shortName>
        <ecNumber evidence="1">2.2.1.10</ecNumber>
    </recommendedName>
</protein>
<feature type="chain" id="PRO_0000363668" description="2-amino-3,7-dideoxy-D-threo-hept-6-ulosonate synthase">
    <location>
        <begin position="1"/>
        <end position="272"/>
    </location>
</feature>
<feature type="active site" description="Proton acceptor" evidence="1">
    <location>
        <position position="33"/>
    </location>
</feature>
<feature type="active site" description="Proton donor" evidence="1">
    <location>
        <position position="153"/>
    </location>
</feature>
<feature type="active site" description="Schiff-base intermediate with substrate" evidence="1">
    <location>
        <position position="184"/>
    </location>
</feature>
<feature type="binding site" evidence="1">
    <location>
        <begin position="33"/>
        <end position="37"/>
    </location>
    <ligand>
        <name>1-deoxy-D-threo-hexo-2,5-diulose 6-phosphate</name>
        <dbReference type="ChEBI" id="CHEBI:58861"/>
    </ligand>
</feature>
<feature type="binding site" evidence="1">
    <location>
        <begin position="153"/>
        <end position="155"/>
    </location>
    <ligand>
        <name>1-deoxy-D-threo-hexo-2,5-diulose 6-phosphate</name>
        <dbReference type="ChEBI" id="CHEBI:58861"/>
    </ligand>
</feature>
<feature type="binding site" evidence="1">
    <location>
        <begin position="209"/>
        <end position="210"/>
    </location>
    <ligand>
        <name>1-deoxy-D-threo-hexo-2,5-diulose 6-phosphate</name>
        <dbReference type="ChEBI" id="CHEBI:58861"/>
    </ligand>
</feature>
<feature type="binding site" evidence="1">
    <location>
        <begin position="237"/>
        <end position="238"/>
    </location>
    <ligand>
        <name>1-deoxy-D-threo-hexo-2,5-diulose 6-phosphate</name>
        <dbReference type="ChEBI" id="CHEBI:58861"/>
    </ligand>
</feature>
<accession>A6VJZ0</accession>
<gene>
    <name evidence="1" type="primary">aroA'</name>
    <name type="ordered locus">MmarC7_1710</name>
</gene>
<organism>
    <name type="scientific">Methanococcus maripaludis (strain C7 / ATCC BAA-1331)</name>
    <dbReference type="NCBI Taxonomy" id="426368"/>
    <lineage>
        <taxon>Archaea</taxon>
        <taxon>Methanobacteriati</taxon>
        <taxon>Methanobacteriota</taxon>
        <taxon>Methanomada group</taxon>
        <taxon>Methanococci</taxon>
        <taxon>Methanococcales</taxon>
        <taxon>Methanococcaceae</taxon>
        <taxon>Methanococcus</taxon>
    </lineage>
</organism>
<sequence>MKMFDNIKNVGKLIRLERIFDKKSEKTVIIPMDHGVSSGPLDGLKDMRITTNAVADGGANAVLGHKGLVRHGHRGYGRDIGLIIHMSAGTSLSPDPNKKVIVTTVEDAMRLGADAVSLHVNVGAETDFEMYRDLGLISETCEQWGMPLIAMMYPRGPKIEDEKDPEVVAHAARLGAELGADIIKTNYTGDPDTFKEVVKGCPAPIVIAGGPKTNTDEEFLQMVKDAMHAGGKGVASGRNVFQHKDVKGITSAICKIVHEDVEVKEALKEIKI</sequence>
<name>ADHS_METM7</name>
<dbReference type="EC" id="2.2.1.10" evidence="1"/>
<dbReference type="EMBL" id="CP000745">
    <property type="protein sequence ID" value="ABR66766.1"/>
    <property type="molecule type" value="Genomic_DNA"/>
</dbReference>
<dbReference type="SMR" id="A6VJZ0"/>
<dbReference type="STRING" id="426368.MmarC7_1710"/>
<dbReference type="KEGG" id="mmz:MmarC7_1710"/>
<dbReference type="eggNOG" id="arCOG04044">
    <property type="taxonomic scope" value="Archaea"/>
</dbReference>
<dbReference type="HOGENOM" id="CLU_057069_2_0_2"/>
<dbReference type="OrthoDB" id="50091at2157"/>
<dbReference type="GO" id="GO:0004332">
    <property type="term" value="F:fructose-bisphosphate aldolase activity"/>
    <property type="evidence" value="ECO:0007669"/>
    <property type="project" value="InterPro"/>
</dbReference>
<dbReference type="GO" id="GO:0016836">
    <property type="term" value="F:hydro-lyase activity"/>
    <property type="evidence" value="ECO:0007669"/>
    <property type="project" value="InterPro"/>
</dbReference>
<dbReference type="GO" id="GO:0016744">
    <property type="term" value="F:transketolase or transaldolase activity"/>
    <property type="evidence" value="ECO:0007669"/>
    <property type="project" value="UniProtKB-UniRule"/>
</dbReference>
<dbReference type="GO" id="GO:0008652">
    <property type="term" value="P:amino acid biosynthetic process"/>
    <property type="evidence" value="ECO:0007669"/>
    <property type="project" value="UniProtKB-KW"/>
</dbReference>
<dbReference type="GO" id="GO:0009073">
    <property type="term" value="P:aromatic amino acid family biosynthetic process"/>
    <property type="evidence" value="ECO:0007669"/>
    <property type="project" value="UniProtKB-UniRule"/>
</dbReference>
<dbReference type="CDD" id="cd00958">
    <property type="entry name" value="DhnA"/>
    <property type="match status" value="1"/>
</dbReference>
<dbReference type="Gene3D" id="3.20.20.70">
    <property type="entry name" value="Aldolase class I"/>
    <property type="match status" value="1"/>
</dbReference>
<dbReference type="HAMAP" id="MF_00960">
    <property type="entry name" value="ADH_synthase"/>
    <property type="match status" value="1"/>
</dbReference>
<dbReference type="InterPro" id="IPR010210">
    <property type="entry name" value="ADH_synthase"/>
</dbReference>
<dbReference type="InterPro" id="IPR013785">
    <property type="entry name" value="Aldolase_TIM"/>
</dbReference>
<dbReference type="InterPro" id="IPR002915">
    <property type="entry name" value="DeoC/FbaB/LacD_aldolase"/>
</dbReference>
<dbReference type="InterPro" id="IPR050456">
    <property type="entry name" value="DeoC/FbaB_aldolase"/>
</dbReference>
<dbReference type="InterPro" id="IPR041720">
    <property type="entry name" value="FbaB-like"/>
</dbReference>
<dbReference type="NCBIfam" id="TIGR01949">
    <property type="entry name" value="ADH_synth"/>
    <property type="match status" value="1"/>
</dbReference>
<dbReference type="NCBIfam" id="NF005556">
    <property type="entry name" value="PRK07226.1"/>
    <property type="match status" value="1"/>
</dbReference>
<dbReference type="PANTHER" id="PTHR47916:SF1">
    <property type="entry name" value="3-HYDROXY-5-PHOSPHONOOXYPENTANE-2,4-DIONE THIOLASE"/>
    <property type="match status" value="1"/>
</dbReference>
<dbReference type="PANTHER" id="PTHR47916">
    <property type="entry name" value="FRUCTOSE-BISPHOSPHATE ALDOLASE CLASS 1"/>
    <property type="match status" value="1"/>
</dbReference>
<dbReference type="Pfam" id="PF01791">
    <property type="entry name" value="DeoC"/>
    <property type="match status" value="1"/>
</dbReference>
<dbReference type="PIRSF" id="PIRSF038992">
    <property type="entry name" value="Aldolase_Ia"/>
    <property type="match status" value="1"/>
</dbReference>
<dbReference type="SMART" id="SM01133">
    <property type="entry name" value="DeoC"/>
    <property type="match status" value="1"/>
</dbReference>
<dbReference type="SUPFAM" id="SSF51569">
    <property type="entry name" value="Aldolase"/>
    <property type="match status" value="1"/>
</dbReference>
<keyword id="KW-0028">Amino-acid biosynthesis</keyword>
<keyword id="KW-0057">Aromatic amino acid biosynthesis</keyword>
<keyword id="KW-0704">Schiff base</keyword>
<keyword id="KW-0808">Transferase</keyword>
<evidence type="ECO:0000255" key="1">
    <source>
        <dbReference type="HAMAP-Rule" id="MF_00960"/>
    </source>
</evidence>
<reference key="1">
    <citation type="submission" date="2007-06" db="EMBL/GenBank/DDBJ databases">
        <title>Complete sequence of Methanococcus maripaludis C7.</title>
        <authorList>
            <consortium name="US DOE Joint Genome Institute"/>
            <person name="Copeland A."/>
            <person name="Lucas S."/>
            <person name="Lapidus A."/>
            <person name="Barry K."/>
            <person name="Glavina del Rio T."/>
            <person name="Dalin E."/>
            <person name="Tice H."/>
            <person name="Pitluck S."/>
            <person name="Clum A."/>
            <person name="Schmutz J."/>
            <person name="Larimer F."/>
            <person name="Land M."/>
            <person name="Hauser L."/>
            <person name="Kyrpides N."/>
            <person name="Anderson I."/>
            <person name="Sieprawska-Lupa M."/>
            <person name="Whitman W.B."/>
            <person name="Richardson P."/>
        </authorList>
    </citation>
    <scope>NUCLEOTIDE SEQUENCE [LARGE SCALE GENOMIC DNA]</scope>
    <source>
        <strain>C7 / ATCC BAA-1331</strain>
    </source>
</reference>